<protein>
    <recommendedName>
        <fullName evidence="1">ATP synthase subunit alpha, chloroplastic</fullName>
        <ecNumber evidence="1">7.1.2.2</ecNumber>
    </recommendedName>
    <alternativeName>
        <fullName evidence="1">ATP synthase F1 sector subunit alpha</fullName>
    </alternativeName>
    <alternativeName>
        <fullName evidence="1">F-ATPase subunit alpha</fullName>
    </alternativeName>
</protein>
<geneLocation type="chloroplast"/>
<proteinExistence type="inferred from homology"/>
<evidence type="ECO:0000255" key="1">
    <source>
        <dbReference type="HAMAP-Rule" id="MF_01346"/>
    </source>
</evidence>
<comment type="function">
    <text evidence="1">Produces ATP from ADP in the presence of a proton gradient across the membrane. The alpha chain is a regulatory subunit.</text>
</comment>
<comment type="catalytic activity">
    <reaction evidence="1">
        <text>ATP + H2O + 4 H(+)(in) = ADP + phosphate + 5 H(+)(out)</text>
        <dbReference type="Rhea" id="RHEA:57720"/>
        <dbReference type="ChEBI" id="CHEBI:15377"/>
        <dbReference type="ChEBI" id="CHEBI:15378"/>
        <dbReference type="ChEBI" id="CHEBI:30616"/>
        <dbReference type="ChEBI" id="CHEBI:43474"/>
        <dbReference type="ChEBI" id="CHEBI:456216"/>
        <dbReference type="EC" id="7.1.2.2"/>
    </reaction>
</comment>
<comment type="subunit">
    <text evidence="1">F-type ATPases have 2 components, CF(1) - the catalytic core - and CF(0) - the membrane proton channel. CF(1) has five subunits: alpha(3), beta(3), gamma(1), delta(1), epsilon(1). CF(0) has four main subunits: a, b, b' and c.</text>
</comment>
<comment type="subcellular location">
    <subcellularLocation>
        <location evidence="1">Plastid</location>
        <location evidence="1">Chloroplast thylakoid membrane</location>
        <topology evidence="1">Peripheral membrane protein</topology>
    </subcellularLocation>
</comment>
<comment type="similarity">
    <text evidence="1">Belongs to the ATPase alpha/beta chains family.</text>
</comment>
<sequence length="510" mass="55754">MVTIRADEISKIIRERIEQYNTEVKIVNTGTVLQVGDGIARIYGLDEVMAGELVEFEEGTIGIALNLESKNVGVVLMGDGLMIQEGSSVKATGRIAQIPVSEAYLGRVINALAKPIDGRGEISASESRLIESPAPGIISRRSVYEPLQTGLIAIDSMIPIGRGQRELIIGDRQTGKTAVATDTILNQQGQNVICVYVAIGQKASSVAQVVNTLQERGAMEYTIVVAETADSPATLQYLAPYTGAALAEYFMYRERHTLIIYDDLSKQAQAYRQMSLLLRRPPGREAYPGDVFYLHSRLLERAAKLSSQLGEGSMTALPIVETQSGDVSAYIPTNVISITDGQIFLSADLFNAGIRPAINVGISVSRVGSAAQIKAMKQVAGKLKLELAQFAELEAFAQFSSDLDKATQNQLARGQRLRELLKQSQSAPLTVEEQIITIYTGTNGYLDSLEIGQVRKFLVELRAYLNTNKPQFKEIISSTKTFTGEAEVLLKEAIQEQMELFLLQEQVEKN</sequence>
<organism>
    <name type="scientific">Glycine max</name>
    <name type="common">Soybean</name>
    <name type="synonym">Glycine hispida</name>
    <dbReference type="NCBI Taxonomy" id="3847"/>
    <lineage>
        <taxon>Eukaryota</taxon>
        <taxon>Viridiplantae</taxon>
        <taxon>Streptophyta</taxon>
        <taxon>Embryophyta</taxon>
        <taxon>Tracheophyta</taxon>
        <taxon>Spermatophyta</taxon>
        <taxon>Magnoliopsida</taxon>
        <taxon>eudicotyledons</taxon>
        <taxon>Gunneridae</taxon>
        <taxon>Pentapetalae</taxon>
        <taxon>rosids</taxon>
        <taxon>fabids</taxon>
        <taxon>Fabales</taxon>
        <taxon>Fabaceae</taxon>
        <taxon>Papilionoideae</taxon>
        <taxon>50 kb inversion clade</taxon>
        <taxon>NPAAA clade</taxon>
        <taxon>indigoferoid/millettioid clade</taxon>
        <taxon>Phaseoleae</taxon>
        <taxon>Glycine</taxon>
        <taxon>Glycine subgen. Soja</taxon>
    </lineage>
</organism>
<feature type="chain" id="PRO_0000238443" description="ATP synthase subunit alpha, chloroplastic">
    <location>
        <begin position="1"/>
        <end position="510"/>
    </location>
</feature>
<feature type="binding site" evidence="1">
    <location>
        <begin position="170"/>
        <end position="177"/>
    </location>
    <ligand>
        <name>ATP</name>
        <dbReference type="ChEBI" id="CHEBI:30616"/>
    </ligand>
</feature>
<feature type="site" description="Required for activity" evidence="1">
    <location>
        <position position="363"/>
    </location>
</feature>
<gene>
    <name evidence="1" type="primary">atpA</name>
</gene>
<name>ATPA_SOYBN</name>
<keyword id="KW-0066">ATP synthesis</keyword>
<keyword id="KW-0067">ATP-binding</keyword>
<keyword id="KW-0139">CF(1)</keyword>
<keyword id="KW-0150">Chloroplast</keyword>
<keyword id="KW-0375">Hydrogen ion transport</keyword>
<keyword id="KW-0406">Ion transport</keyword>
<keyword id="KW-0472">Membrane</keyword>
<keyword id="KW-0547">Nucleotide-binding</keyword>
<keyword id="KW-0934">Plastid</keyword>
<keyword id="KW-1185">Reference proteome</keyword>
<keyword id="KW-0793">Thylakoid</keyword>
<keyword id="KW-1278">Translocase</keyword>
<keyword id="KW-0813">Transport</keyword>
<reference key="1">
    <citation type="journal article" date="2005" name="Plant Mol. Biol.">
        <title>Complete chloroplast genome sequence of Glycine max and comparative analyses with other legume genomes.</title>
        <authorList>
            <person name="Saski C."/>
            <person name="Lee S.-B."/>
            <person name="Daniell H."/>
            <person name="Wood T.C."/>
            <person name="Tomkins J."/>
            <person name="Kim H.-G."/>
            <person name="Jansen R.K."/>
        </authorList>
    </citation>
    <scope>NUCLEOTIDE SEQUENCE [LARGE SCALE GENOMIC DNA]</scope>
    <source>
        <strain>cv. PI 437654</strain>
    </source>
</reference>
<dbReference type="EC" id="7.1.2.2" evidence="1"/>
<dbReference type="EMBL" id="DQ317523">
    <property type="protein sequence ID" value="ABC25130.1"/>
    <property type="molecule type" value="Genomic_DNA"/>
</dbReference>
<dbReference type="RefSeq" id="YP_538770.1">
    <property type="nucleotide sequence ID" value="NC_007942.1"/>
</dbReference>
<dbReference type="SMR" id="Q2PMS8"/>
<dbReference type="FunCoup" id="Q2PMS8">
    <property type="interactions" value="551"/>
</dbReference>
<dbReference type="STRING" id="3847.Q2PMS8"/>
<dbReference type="PaxDb" id="3847-GLYMA12G36106.1"/>
<dbReference type="GeneID" id="3989298"/>
<dbReference type="KEGG" id="gmx:3989298"/>
<dbReference type="eggNOG" id="KOG1353">
    <property type="taxonomic scope" value="Eukaryota"/>
</dbReference>
<dbReference type="InParanoid" id="Q2PMS8"/>
<dbReference type="Proteomes" id="UP000008827">
    <property type="component" value="Chloroplast"/>
</dbReference>
<dbReference type="GO" id="GO:0009535">
    <property type="term" value="C:chloroplast thylakoid membrane"/>
    <property type="evidence" value="ECO:0007669"/>
    <property type="project" value="UniProtKB-SubCell"/>
</dbReference>
<dbReference type="GO" id="GO:0045259">
    <property type="term" value="C:proton-transporting ATP synthase complex"/>
    <property type="evidence" value="ECO:0007669"/>
    <property type="project" value="UniProtKB-KW"/>
</dbReference>
<dbReference type="GO" id="GO:0043531">
    <property type="term" value="F:ADP binding"/>
    <property type="evidence" value="ECO:0000318"/>
    <property type="project" value="GO_Central"/>
</dbReference>
<dbReference type="GO" id="GO:0005524">
    <property type="term" value="F:ATP binding"/>
    <property type="evidence" value="ECO:0000318"/>
    <property type="project" value="GO_Central"/>
</dbReference>
<dbReference type="GO" id="GO:0046933">
    <property type="term" value="F:proton-transporting ATP synthase activity, rotational mechanism"/>
    <property type="evidence" value="ECO:0007669"/>
    <property type="project" value="UniProtKB-UniRule"/>
</dbReference>
<dbReference type="GO" id="GO:0015986">
    <property type="term" value="P:proton motive force-driven ATP synthesis"/>
    <property type="evidence" value="ECO:0000318"/>
    <property type="project" value="GO_Central"/>
</dbReference>
<dbReference type="CDD" id="cd18113">
    <property type="entry name" value="ATP-synt_F1_alpha_C"/>
    <property type="match status" value="1"/>
</dbReference>
<dbReference type="CDD" id="cd18116">
    <property type="entry name" value="ATP-synt_F1_alpha_N"/>
    <property type="match status" value="1"/>
</dbReference>
<dbReference type="CDD" id="cd01132">
    <property type="entry name" value="F1-ATPase_alpha_CD"/>
    <property type="match status" value="1"/>
</dbReference>
<dbReference type="FunFam" id="1.20.150.20:FF:000001">
    <property type="entry name" value="ATP synthase subunit alpha"/>
    <property type="match status" value="1"/>
</dbReference>
<dbReference type="FunFam" id="2.40.30.20:FF:000001">
    <property type="entry name" value="ATP synthase subunit alpha"/>
    <property type="match status" value="1"/>
</dbReference>
<dbReference type="FunFam" id="3.40.50.300:FF:000002">
    <property type="entry name" value="ATP synthase subunit alpha"/>
    <property type="match status" value="1"/>
</dbReference>
<dbReference type="Gene3D" id="2.40.30.20">
    <property type="match status" value="1"/>
</dbReference>
<dbReference type="Gene3D" id="1.20.150.20">
    <property type="entry name" value="ATP synthase alpha/beta chain, C-terminal domain"/>
    <property type="match status" value="1"/>
</dbReference>
<dbReference type="Gene3D" id="3.40.50.300">
    <property type="entry name" value="P-loop containing nucleotide triphosphate hydrolases"/>
    <property type="match status" value="1"/>
</dbReference>
<dbReference type="HAMAP" id="MF_01346">
    <property type="entry name" value="ATP_synth_alpha_bact"/>
    <property type="match status" value="1"/>
</dbReference>
<dbReference type="InterPro" id="IPR023366">
    <property type="entry name" value="ATP_synth_asu-like_sf"/>
</dbReference>
<dbReference type="InterPro" id="IPR000793">
    <property type="entry name" value="ATP_synth_asu_C"/>
</dbReference>
<dbReference type="InterPro" id="IPR038376">
    <property type="entry name" value="ATP_synth_asu_C_sf"/>
</dbReference>
<dbReference type="InterPro" id="IPR033732">
    <property type="entry name" value="ATP_synth_F1_a_nt-bd_dom"/>
</dbReference>
<dbReference type="InterPro" id="IPR005294">
    <property type="entry name" value="ATP_synth_F1_asu"/>
</dbReference>
<dbReference type="InterPro" id="IPR020003">
    <property type="entry name" value="ATPase_a/bsu_AS"/>
</dbReference>
<dbReference type="InterPro" id="IPR004100">
    <property type="entry name" value="ATPase_F1/V1/A1_a/bsu_N"/>
</dbReference>
<dbReference type="InterPro" id="IPR036121">
    <property type="entry name" value="ATPase_F1/V1/A1_a/bsu_N_sf"/>
</dbReference>
<dbReference type="InterPro" id="IPR000194">
    <property type="entry name" value="ATPase_F1/V1/A1_a/bsu_nucl-bd"/>
</dbReference>
<dbReference type="InterPro" id="IPR027417">
    <property type="entry name" value="P-loop_NTPase"/>
</dbReference>
<dbReference type="NCBIfam" id="TIGR00962">
    <property type="entry name" value="atpA"/>
    <property type="match status" value="1"/>
</dbReference>
<dbReference type="NCBIfam" id="NF009884">
    <property type="entry name" value="PRK13343.1"/>
    <property type="match status" value="1"/>
</dbReference>
<dbReference type="PANTHER" id="PTHR48082">
    <property type="entry name" value="ATP SYNTHASE SUBUNIT ALPHA, MITOCHONDRIAL"/>
    <property type="match status" value="1"/>
</dbReference>
<dbReference type="PANTHER" id="PTHR48082:SF2">
    <property type="entry name" value="ATP SYNTHASE SUBUNIT ALPHA, MITOCHONDRIAL"/>
    <property type="match status" value="1"/>
</dbReference>
<dbReference type="Pfam" id="PF00006">
    <property type="entry name" value="ATP-synt_ab"/>
    <property type="match status" value="1"/>
</dbReference>
<dbReference type="Pfam" id="PF00306">
    <property type="entry name" value="ATP-synt_ab_C"/>
    <property type="match status" value="1"/>
</dbReference>
<dbReference type="Pfam" id="PF02874">
    <property type="entry name" value="ATP-synt_ab_N"/>
    <property type="match status" value="1"/>
</dbReference>
<dbReference type="PIRSF" id="PIRSF039088">
    <property type="entry name" value="F_ATPase_subunit_alpha"/>
    <property type="match status" value="1"/>
</dbReference>
<dbReference type="SUPFAM" id="SSF47917">
    <property type="entry name" value="C-terminal domain of alpha and beta subunits of F1 ATP synthase"/>
    <property type="match status" value="1"/>
</dbReference>
<dbReference type="SUPFAM" id="SSF50615">
    <property type="entry name" value="N-terminal domain of alpha and beta subunits of F1 ATP synthase"/>
    <property type="match status" value="1"/>
</dbReference>
<dbReference type="SUPFAM" id="SSF52540">
    <property type="entry name" value="P-loop containing nucleoside triphosphate hydrolases"/>
    <property type="match status" value="1"/>
</dbReference>
<dbReference type="PROSITE" id="PS00152">
    <property type="entry name" value="ATPASE_ALPHA_BETA"/>
    <property type="match status" value="1"/>
</dbReference>
<accession>Q2PMS8</accession>